<protein>
    <recommendedName>
        <fullName>Tubulin beta-2 chain</fullName>
    </recommendedName>
    <alternativeName>
        <fullName>Beta-2-tubulin</fullName>
    </alternativeName>
</protein>
<name>TBB2_ANEPH</name>
<gene>
    <name type="primary">TUBB2</name>
</gene>
<organism>
    <name type="scientific">Anemia phyllitidis</name>
    <name type="common">Fern</name>
    <name type="synonym">Osmunda phyllitidis</name>
    <dbReference type="NCBI Taxonomy" id="12940"/>
    <lineage>
        <taxon>Eukaryota</taxon>
        <taxon>Viridiplantae</taxon>
        <taxon>Streptophyta</taxon>
        <taxon>Embryophyta</taxon>
        <taxon>Tracheophyta</taxon>
        <taxon>Polypodiopsida</taxon>
        <taxon>Polypodiidae</taxon>
        <taxon>Schizaeales</taxon>
        <taxon>Anemiaceae</taxon>
        <taxon>Anemia</taxon>
    </lineage>
</organism>
<reference key="1">
    <citation type="submission" date="1993-04" db="EMBL/GenBank/DDBJ databases">
        <title>Characterization of the alpha and beta tubulin gene families from Anemia phyllitidis L.Sw.</title>
        <authorList>
            <person name="Moepps B."/>
            <person name="Maucher H.P."/>
            <person name="Bogenberger J.M."/>
            <person name="Schraudolf H."/>
        </authorList>
    </citation>
    <scope>NUCLEOTIDE SEQUENCE [MRNA]</scope>
</reference>
<evidence type="ECO:0000250" key="1">
    <source>
        <dbReference type="UniProtKB" id="P68363"/>
    </source>
</evidence>
<evidence type="ECO:0000250" key="2">
    <source>
        <dbReference type="UniProtKB" id="Q13509"/>
    </source>
</evidence>
<evidence type="ECO:0000256" key="3">
    <source>
        <dbReference type="SAM" id="MobiDB-lite"/>
    </source>
</evidence>
<evidence type="ECO:0000305" key="4"/>
<accession>P33631</accession>
<comment type="function">
    <text>Tubulin is the major constituent of microtubules, a cylinder consisting of laterally associated linear protofilaments composed of alpha- and beta-tubulin heterodimers. Microtubules grow by the addition of GTP-tubulin dimers to the microtubule end, where a stabilizing cap forms. Below the cap, tubulin dimers are in GDP-bound state, owing to GTPase activity of alpha-tubulin.</text>
</comment>
<comment type="cofactor">
    <cofactor evidence="1">
        <name>Mg(2+)</name>
        <dbReference type="ChEBI" id="CHEBI:18420"/>
    </cofactor>
</comment>
<comment type="subunit">
    <text>Dimer of alpha and beta chains. A typical microtubule is a hollow water-filled tube with an outer diameter of 25 nm and an inner diameter of 15 nM. Alpha-beta heterodimers associate head-to-tail to form protofilaments running lengthwise along the microtubule wall with the beta-tubulin subunit facing the microtubule plus end conferring a structural polarity. Microtubules usually have 13 protofilaments but different protofilament numbers can be found in some organisms and specialized cells.</text>
</comment>
<comment type="subcellular location">
    <subcellularLocation>
        <location>Cytoplasm</location>
        <location>Cytoskeleton</location>
    </subcellularLocation>
</comment>
<comment type="similarity">
    <text evidence="4">Belongs to the tubulin family.</text>
</comment>
<sequence length="411" mass="46218">TGTYRGDSETQLERVNVYYNEASCGRYVPRAVLMDLEPGTMDSVRSGPYGQIFRPDNFVFGQSGAGNNWAKGHYTEGAELIDSVLDVVRKEAENCDCLQGFQVCHSLGGGTGSGMGTLLISKIREEYPDRMMXTFSVFPSPKVSDTVVEPYNATLSVHQLVENADECMVLDNEALYDICFRTLKLVTPTFGDLNHLISATMSGVTCCLRFPGQLNSDLRKLAVNLIPFPRLHFFMVGFAPLTSRGSQQYRALTVPELTQQMRDAKNMMCAADPRHGRYLTASAMFRGKMSTKEVDEQMINVQNKNSSYFVEWIPNNVKSSVCDIPPVGLKMACTFIGNSTSIQEMFRRVRDQFTAMFRXKAFLHWYTGEGMDEMEFTEAESNMNDLVSEYQQYQDATAEPEGXYEEDYDEA</sequence>
<proteinExistence type="evidence at transcript level"/>
<feature type="chain" id="PRO_0000048330" description="Tubulin beta-2 chain">
    <location>
        <begin position="1" status="less than"/>
        <end position="411"/>
    </location>
</feature>
<feature type="region of interest" description="Disordered" evidence="3">
    <location>
        <begin position="392"/>
        <end position="411"/>
    </location>
</feature>
<feature type="compositionally biased region" description="Acidic residues" evidence="3">
    <location>
        <begin position="402"/>
        <end position="411"/>
    </location>
</feature>
<feature type="binding site" evidence="1">
    <location>
        <position position="37"/>
    </location>
    <ligand>
        <name>GTP</name>
        <dbReference type="ChEBI" id="CHEBI:37565"/>
    </ligand>
</feature>
<feature type="binding site" evidence="1">
    <location>
        <position position="37"/>
    </location>
    <ligand>
        <name>Mg(2+)</name>
        <dbReference type="ChEBI" id="CHEBI:18420"/>
    </ligand>
</feature>
<feature type="binding site" evidence="2">
    <location>
        <position position="106"/>
    </location>
    <ligand>
        <name>GTP</name>
        <dbReference type="ChEBI" id="CHEBI:37565"/>
    </ligand>
</feature>
<feature type="binding site" evidence="2">
    <location>
        <position position="110"/>
    </location>
    <ligand>
        <name>GTP</name>
        <dbReference type="ChEBI" id="CHEBI:37565"/>
    </ligand>
</feature>
<feature type="binding site" evidence="2">
    <location>
        <position position="111"/>
    </location>
    <ligand>
        <name>GTP</name>
        <dbReference type="ChEBI" id="CHEBI:37565"/>
    </ligand>
</feature>
<feature type="binding site" evidence="2">
    <location>
        <position position="112"/>
    </location>
    <ligand>
        <name>GTP</name>
        <dbReference type="ChEBI" id="CHEBI:37565"/>
    </ligand>
</feature>
<feature type="binding site" evidence="2">
    <location>
        <position position="172"/>
    </location>
    <ligand>
        <name>GTP</name>
        <dbReference type="ChEBI" id="CHEBI:37565"/>
    </ligand>
</feature>
<feature type="binding site" evidence="2">
    <location>
        <position position="194"/>
    </location>
    <ligand>
        <name>GTP</name>
        <dbReference type="ChEBI" id="CHEBI:37565"/>
    </ligand>
</feature>
<feature type="non-terminal residue">
    <location>
        <position position="1"/>
    </location>
</feature>
<dbReference type="EMBL" id="X69186">
    <property type="protein sequence ID" value="CAA48930.1"/>
    <property type="molecule type" value="mRNA"/>
</dbReference>
<dbReference type="PIR" id="S32669">
    <property type="entry name" value="S32669"/>
</dbReference>
<dbReference type="GO" id="GO:0005737">
    <property type="term" value="C:cytoplasm"/>
    <property type="evidence" value="ECO:0007669"/>
    <property type="project" value="UniProtKB-KW"/>
</dbReference>
<dbReference type="GO" id="GO:0005874">
    <property type="term" value="C:microtubule"/>
    <property type="evidence" value="ECO:0007669"/>
    <property type="project" value="UniProtKB-KW"/>
</dbReference>
<dbReference type="GO" id="GO:0005525">
    <property type="term" value="F:GTP binding"/>
    <property type="evidence" value="ECO:0007669"/>
    <property type="project" value="UniProtKB-KW"/>
</dbReference>
<dbReference type="GO" id="GO:0003924">
    <property type="term" value="F:GTPase activity"/>
    <property type="evidence" value="ECO:0007669"/>
    <property type="project" value="InterPro"/>
</dbReference>
<dbReference type="GO" id="GO:0046872">
    <property type="term" value="F:metal ion binding"/>
    <property type="evidence" value="ECO:0007669"/>
    <property type="project" value="UniProtKB-KW"/>
</dbReference>
<dbReference type="GO" id="GO:0005200">
    <property type="term" value="F:structural constituent of cytoskeleton"/>
    <property type="evidence" value="ECO:0007669"/>
    <property type="project" value="InterPro"/>
</dbReference>
<dbReference type="GO" id="GO:0007017">
    <property type="term" value="P:microtubule-based process"/>
    <property type="evidence" value="ECO:0007669"/>
    <property type="project" value="InterPro"/>
</dbReference>
<dbReference type="CDD" id="cd02187">
    <property type="entry name" value="beta_tubulin"/>
    <property type="match status" value="1"/>
</dbReference>
<dbReference type="FunFam" id="1.10.287.600:FF:000002">
    <property type="entry name" value="Tubulin beta chain"/>
    <property type="match status" value="1"/>
</dbReference>
<dbReference type="FunFam" id="3.30.1330.20:FF:000002">
    <property type="entry name" value="Tubulin beta chain"/>
    <property type="match status" value="1"/>
</dbReference>
<dbReference type="FunFam" id="3.40.50.1440:FF:000006">
    <property type="entry name" value="Tubulin beta chain"/>
    <property type="match status" value="1"/>
</dbReference>
<dbReference type="Gene3D" id="1.10.287.600">
    <property type="entry name" value="Helix hairpin bin"/>
    <property type="match status" value="1"/>
</dbReference>
<dbReference type="Gene3D" id="3.30.1330.20">
    <property type="entry name" value="Tubulin/FtsZ, C-terminal domain"/>
    <property type="match status" value="1"/>
</dbReference>
<dbReference type="Gene3D" id="3.40.50.1440">
    <property type="entry name" value="Tubulin/FtsZ, GTPase domain"/>
    <property type="match status" value="1"/>
</dbReference>
<dbReference type="InterPro" id="IPR002453">
    <property type="entry name" value="Beta_tubulin"/>
</dbReference>
<dbReference type="InterPro" id="IPR008280">
    <property type="entry name" value="Tub_FtsZ_C"/>
</dbReference>
<dbReference type="InterPro" id="IPR000217">
    <property type="entry name" value="Tubulin"/>
</dbReference>
<dbReference type="InterPro" id="IPR037103">
    <property type="entry name" value="Tubulin/FtsZ-like_C"/>
</dbReference>
<dbReference type="InterPro" id="IPR018316">
    <property type="entry name" value="Tubulin/FtsZ_2-layer-sand-dom"/>
</dbReference>
<dbReference type="InterPro" id="IPR036525">
    <property type="entry name" value="Tubulin/FtsZ_GTPase_sf"/>
</dbReference>
<dbReference type="InterPro" id="IPR023123">
    <property type="entry name" value="Tubulin_C"/>
</dbReference>
<dbReference type="InterPro" id="IPR017975">
    <property type="entry name" value="Tubulin_CS"/>
</dbReference>
<dbReference type="InterPro" id="IPR003008">
    <property type="entry name" value="Tubulin_FtsZ_GTPase"/>
</dbReference>
<dbReference type="PANTHER" id="PTHR11588">
    <property type="entry name" value="TUBULIN"/>
    <property type="match status" value="1"/>
</dbReference>
<dbReference type="Pfam" id="PF00091">
    <property type="entry name" value="Tubulin"/>
    <property type="match status" value="1"/>
</dbReference>
<dbReference type="Pfam" id="PF03953">
    <property type="entry name" value="Tubulin_C"/>
    <property type="match status" value="1"/>
</dbReference>
<dbReference type="PRINTS" id="PR01163">
    <property type="entry name" value="BETATUBULIN"/>
</dbReference>
<dbReference type="PRINTS" id="PR01161">
    <property type="entry name" value="TUBULIN"/>
</dbReference>
<dbReference type="SMART" id="SM00864">
    <property type="entry name" value="Tubulin"/>
    <property type="match status" value="1"/>
</dbReference>
<dbReference type="SMART" id="SM00865">
    <property type="entry name" value="Tubulin_C"/>
    <property type="match status" value="1"/>
</dbReference>
<dbReference type="SUPFAM" id="SSF55307">
    <property type="entry name" value="Tubulin C-terminal domain-like"/>
    <property type="match status" value="1"/>
</dbReference>
<dbReference type="SUPFAM" id="SSF52490">
    <property type="entry name" value="Tubulin nucleotide-binding domain-like"/>
    <property type="match status" value="1"/>
</dbReference>
<dbReference type="PROSITE" id="PS00227">
    <property type="entry name" value="TUBULIN"/>
    <property type="match status" value="1"/>
</dbReference>
<keyword id="KW-0963">Cytoplasm</keyword>
<keyword id="KW-0206">Cytoskeleton</keyword>
<keyword id="KW-0342">GTP-binding</keyword>
<keyword id="KW-0460">Magnesium</keyword>
<keyword id="KW-0479">Metal-binding</keyword>
<keyword id="KW-0493">Microtubule</keyword>
<keyword id="KW-0547">Nucleotide-binding</keyword>